<dbReference type="EMBL" id="AE009950">
    <property type="protein sequence ID" value="AAL82136.1"/>
    <property type="molecule type" value="Genomic_DNA"/>
</dbReference>
<dbReference type="RefSeq" id="WP_011013157.1">
    <property type="nucleotide sequence ID" value="NZ_CP023154.1"/>
</dbReference>
<dbReference type="SMR" id="P61877"/>
<dbReference type="STRING" id="186497.PF2012"/>
<dbReference type="PaxDb" id="186497-PF2012"/>
<dbReference type="KEGG" id="pfu:PF2012"/>
<dbReference type="PATRIC" id="fig|186497.12.peg.2089"/>
<dbReference type="eggNOG" id="arCOG01559">
    <property type="taxonomic scope" value="Archaea"/>
</dbReference>
<dbReference type="HOGENOM" id="CLU_002794_11_1_2"/>
<dbReference type="OrthoDB" id="6290at2157"/>
<dbReference type="PhylomeDB" id="P61877"/>
<dbReference type="Proteomes" id="UP000001013">
    <property type="component" value="Chromosome"/>
</dbReference>
<dbReference type="GO" id="GO:0005829">
    <property type="term" value="C:cytosol"/>
    <property type="evidence" value="ECO:0007669"/>
    <property type="project" value="TreeGrafter"/>
</dbReference>
<dbReference type="GO" id="GO:1990904">
    <property type="term" value="C:ribonucleoprotein complex"/>
    <property type="evidence" value="ECO:0007669"/>
    <property type="project" value="TreeGrafter"/>
</dbReference>
<dbReference type="GO" id="GO:0005525">
    <property type="term" value="F:GTP binding"/>
    <property type="evidence" value="ECO:0007669"/>
    <property type="project" value="UniProtKB-UniRule"/>
</dbReference>
<dbReference type="GO" id="GO:0003924">
    <property type="term" value="F:GTPase activity"/>
    <property type="evidence" value="ECO:0007669"/>
    <property type="project" value="InterPro"/>
</dbReference>
<dbReference type="GO" id="GO:0003746">
    <property type="term" value="F:translation elongation factor activity"/>
    <property type="evidence" value="ECO:0007669"/>
    <property type="project" value="UniProtKB-UniRule"/>
</dbReference>
<dbReference type="CDD" id="cd01681">
    <property type="entry name" value="aeEF2_snRNP_like_IV"/>
    <property type="match status" value="1"/>
</dbReference>
<dbReference type="CDD" id="cd01885">
    <property type="entry name" value="EF2"/>
    <property type="match status" value="1"/>
</dbReference>
<dbReference type="CDD" id="cd16268">
    <property type="entry name" value="EF2_II"/>
    <property type="match status" value="1"/>
</dbReference>
<dbReference type="CDD" id="cd16261">
    <property type="entry name" value="EF2_snRNP_III"/>
    <property type="match status" value="1"/>
</dbReference>
<dbReference type="CDD" id="cd01514">
    <property type="entry name" value="Elongation_Factor_C"/>
    <property type="match status" value="1"/>
</dbReference>
<dbReference type="FunFam" id="3.30.230.10:FF:000009">
    <property type="entry name" value="116 kDa U5 small nuclear ribonucleoprotein component"/>
    <property type="match status" value="1"/>
</dbReference>
<dbReference type="FunFam" id="2.40.30.10:FF:000110">
    <property type="entry name" value="Elongation factor 2"/>
    <property type="match status" value="1"/>
</dbReference>
<dbReference type="FunFam" id="3.30.70.240:FF:000010">
    <property type="entry name" value="Elongation factor 2"/>
    <property type="match status" value="1"/>
</dbReference>
<dbReference type="FunFam" id="3.40.50.300:FF:000684">
    <property type="entry name" value="Elongation factor 2"/>
    <property type="match status" value="1"/>
</dbReference>
<dbReference type="FunFam" id="3.30.70.870:FF:000002">
    <property type="entry name" value="Translation elongation factor 2"/>
    <property type="match status" value="1"/>
</dbReference>
<dbReference type="Gene3D" id="3.30.230.10">
    <property type="match status" value="1"/>
</dbReference>
<dbReference type="Gene3D" id="3.30.70.240">
    <property type="match status" value="1"/>
</dbReference>
<dbReference type="Gene3D" id="3.30.70.870">
    <property type="entry name" value="Elongation Factor G (Translational Gtpase), domain 3"/>
    <property type="match status" value="1"/>
</dbReference>
<dbReference type="Gene3D" id="3.40.50.300">
    <property type="entry name" value="P-loop containing nucleotide triphosphate hydrolases"/>
    <property type="match status" value="1"/>
</dbReference>
<dbReference type="Gene3D" id="2.40.30.10">
    <property type="entry name" value="Translation factors"/>
    <property type="match status" value="1"/>
</dbReference>
<dbReference type="HAMAP" id="MF_00054_A">
    <property type="entry name" value="EF_G_EF_2_A"/>
    <property type="match status" value="1"/>
</dbReference>
<dbReference type="InterPro" id="IPR041095">
    <property type="entry name" value="EFG_II"/>
</dbReference>
<dbReference type="InterPro" id="IPR035647">
    <property type="entry name" value="EFG_III/V"/>
</dbReference>
<dbReference type="InterPro" id="IPR000640">
    <property type="entry name" value="EFG_V-like"/>
</dbReference>
<dbReference type="InterPro" id="IPR004161">
    <property type="entry name" value="EFTu-like_2"/>
</dbReference>
<dbReference type="InterPro" id="IPR031157">
    <property type="entry name" value="G_TR_CS"/>
</dbReference>
<dbReference type="InterPro" id="IPR027417">
    <property type="entry name" value="P-loop_NTPase"/>
</dbReference>
<dbReference type="InterPro" id="IPR020568">
    <property type="entry name" value="Ribosomal_Su5_D2-typ_SF"/>
</dbReference>
<dbReference type="InterPro" id="IPR014721">
    <property type="entry name" value="Ribsml_uS5_D2-typ_fold_subgr"/>
</dbReference>
<dbReference type="InterPro" id="IPR005225">
    <property type="entry name" value="Small_GTP-bd"/>
</dbReference>
<dbReference type="InterPro" id="IPR000795">
    <property type="entry name" value="T_Tr_GTP-bd_dom"/>
</dbReference>
<dbReference type="InterPro" id="IPR009000">
    <property type="entry name" value="Transl_B-barrel_sf"/>
</dbReference>
<dbReference type="InterPro" id="IPR004543">
    <property type="entry name" value="Transl_elong_EFG/EF2_arc"/>
</dbReference>
<dbReference type="InterPro" id="IPR005517">
    <property type="entry name" value="Transl_elong_EFG/EF2_IV"/>
</dbReference>
<dbReference type="NCBIfam" id="TIGR00490">
    <property type="entry name" value="aEF-2"/>
    <property type="match status" value="1"/>
</dbReference>
<dbReference type="NCBIfam" id="TIGR00231">
    <property type="entry name" value="small_GTP"/>
    <property type="match status" value="1"/>
</dbReference>
<dbReference type="PANTHER" id="PTHR42908:SF3">
    <property type="entry name" value="ELONGATION FACTOR-LIKE GTPASE 1"/>
    <property type="match status" value="1"/>
</dbReference>
<dbReference type="PANTHER" id="PTHR42908">
    <property type="entry name" value="TRANSLATION ELONGATION FACTOR-RELATED"/>
    <property type="match status" value="1"/>
</dbReference>
<dbReference type="Pfam" id="PF00679">
    <property type="entry name" value="EFG_C"/>
    <property type="match status" value="1"/>
</dbReference>
<dbReference type="Pfam" id="PF14492">
    <property type="entry name" value="EFG_III"/>
    <property type="match status" value="1"/>
</dbReference>
<dbReference type="Pfam" id="PF03764">
    <property type="entry name" value="EFG_IV"/>
    <property type="match status" value="1"/>
</dbReference>
<dbReference type="Pfam" id="PF00009">
    <property type="entry name" value="GTP_EFTU"/>
    <property type="match status" value="1"/>
</dbReference>
<dbReference type="Pfam" id="PF03144">
    <property type="entry name" value="GTP_EFTU_D2"/>
    <property type="match status" value="1"/>
</dbReference>
<dbReference type="PRINTS" id="PR00315">
    <property type="entry name" value="ELONGATNFCT"/>
</dbReference>
<dbReference type="SMART" id="SM00838">
    <property type="entry name" value="EFG_C"/>
    <property type="match status" value="1"/>
</dbReference>
<dbReference type="SMART" id="SM00889">
    <property type="entry name" value="EFG_IV"/>
    <property type="match status" value="1"/>
</dbReference>
<dbReference type="SUPFAM" id="SSF54980">
    <property type="entry name" value="EF-G C-terminal domain-like"/>
    <property type="match status" value="2"/>
</dbReference>
<dbReference type="SUPFAM" id="SSF52540">
    <property type="entry name" value="P-loop containing nucleoside triphosphate hydrolases"/>
    <property type="match status" value="1"/>
</dbReference>
<dbReference type="SUPFAM" id="SSF54211">
    <property type="entry name" value="Ribosomal protein S5 domain 2-like"/>
    <property type="match status" value="1"/>
</dbReference>
<dbReference type="SUPFAM" id="SSF50447">
    <property type="entry name" value="Translation proteins"/>
    <property type="match status" value="1"/>
</dbReference>
<dbReference type="PROSITE" id="PS00301">
    <property type="entry name" value="G_TR_1"/>
    <property type="match status" value="1"/>
</dbReference>
<dbReference type="PROSITE" id="PS51722">
    <property type="entry name" value="G_TR_2"/>
    <property type="match status" value="1"/>
</dbReference>
<evidence type="ECO:0000250" key="1"/>
<evidence type="ECO:0000305" key="2"/>
<gene>
    <name type="primary">fusA</name>
    <name type="synonym">fus</name>
    <name type="ordered locus">PF2012</name>
</gene>
<proteinExistence type="inferred from homology"/>
<accession>P61877</accession>
<accession>P29050</accession>
<name>EF2_PYRFU</name>
<sequence length="732" mass="82255">MGRREEMIAKIKELMLQPERIRNIGIAAHIDHGKTTLSDNLLAGAGMISEELAGKQLVLDFDEQEQARGITINAANVSMVHNYEGKDYLINLIDTPGHVDFGGDVTRAMRAIDGVIIVVDAVEGVMPQTETVVRQALREYVKPVLFINKVDRLIRELKLTPQQMMERFSKIIMDVNRLIQRYAPEEYKKKWMVRVEDGSVAFGSAYYNWALSVPFMQRTGVKFNEIIDLTLKGDNKTLRQRAPLHVVVLDMVVRHLPSPIEAQKYRIPHLWQGDINSKIGQAMLNCDPKGKMVMVITKIIIDKHAGEVATGRVWSGTVRSGQEVYLINSKRKGRIQQVGIYMGPERINMEAVPAGNIVAVTGLRDAMAGETVAEEQIEPFEALHYVSEPVVTVAIEAKNVKDLPRLIEALRQLAKEDPTLHVKIDEETGQHLLSGMGELHLEVKLYKLQKDWGIEVDVSEPIVVYRESITKPSPIVEGKSPNKHNRFYVVVEPMPDEIYQAIKEGIIPEGRVKDPKAVAKKLAELGMDYDIARGVVDIYNGNMFLDNTKGIQYLNEVMDLLIDGFHQAMDEGPLAKEPVMKVIVRLVDAQVHEDNVHRGPAQIYPAIRTAIHCAMMKAGPVLYEPYQKVIINIPYEYMGAVSREISQRRGQLIDMRQEGEVMTIIAEAPVAEMFGFAGAIRSATSGRALWSTEHAGFKRVPNELAQQIIRQIRQRKGLDPNPPTEKDVCPLF</sequence>
<keyword id="KW-0963">Cytoplasm</keyword>
<keyword id="KW-0251">Elongation factor</keyword>
<keyword id="KW-0342">GTP-binding</keyword>
<keyword id="KW-0547">Nucleotide-binding</keyword>
<keyword id="KW-0648">Protein biosynthesis</keyword>
<keyword id="KW-1185">Reference proteome</keyword>
<protein>
    <recommendedName>
        <fullName>Elongation factor 2</fullName>
        <shortName>EF-2</shortName>
    </recommendedName>
</protein>
<feature type="chain" id="PRO_0000091043" description="Elongation factor 2">
    <location>
        <begin position="1"/>
        <end position="732"/>
    </location>
</feature>
<feature type="domain" description="tr-type G">
    <location>
        <begin position="19"/>
        <end position="260"/>
    </location>
</feature>
<feature type="binding site" evidence="1">
    <location>
        <begin position="28"/>
        <end position="35"/>
    </location>
    <ligand>
        <name>GTP</name>
        <dbReference type="ChEBI" id="CHEBI:37565"/>
    </ligand>
</feature>
<feature type="binding site" evidence="1">
    <location>
        <begin position="94"/>
        <end position="98"/>
    </location>
    <ligand>
        <name>GTP</name>
        <dbReference type="ChEBI" id="CHEBI:37565"/>
    </ligand>
</feature>
<feature type="binding site" evidence="1">
    <location>
        <begin position="148"/>
        <end position="151"/>
    </location>
    <ligand>
        <name>GTP</name>
        <dbReference type="ChEBI" id="CHEBI:37565"/>
    </ligand>
</feature>
<feature type="modified residue" description="Diphthamide" evidence="1">
    <location>
        <position position="597"/>
    </location>
</feature>
<comment type="function">
    <text evidence="1">Catalyzes the GTP-dependent ribosomal translocation step during translation elongation. During this step, the ribosome changes from the pre-translocational (PRE) to the post-translocational (POST) state as the newly formed A-site-bound peptidyl-tRNA and P-site-bound deacylated tRNA move to the P and E sites, respectively. Catalyzes the coordinated movement of the two tRNA molecules, the mRNA and conformational changes in the ribosome (By similarity).</text>
</comment>
<comment type="subcellular location">
    <subcellularLocation>
        <location evidence="1">Cytoplasm</location>
    </subcellularLocation>
</comment>
<comment type="similarity">
    <text evidence="2">Belongs to the TRAFAC class translation factor GTPase superfamily. Classic translation factor GTPase family. EF-G/EF-2 subfamily.</text>
</comment>
<reference key="1">
    <citation type="journal article" date="1999" name="Genetics">
        <title>Divergence of the hyperthermophilic archaea Pyrococcus furiosus and P. horikoshii inferred from complete genomic sequences.</title>
        <authorList>
            <person name="Maeder D.L."/>
            <person name="Weiss R.B."/>
            <person name="Dunn D.M."/>
            <person name="Cherry J.L."/>
            <person name="Gonzalez J.M."/>
            <person name="DiRuggiero J."/>
            <person name="Robb F.T."/>
        </authorList>
    </citation>
    <scope>NUCLEOTIDE SEQUENCE [LARGE SCALE GENOMIC DNA]</scope>
    <source>
        <strain>ATCC 43587 / DSM 3638 / JCM 8422 / Vc1</strain>
    </source>
</reference>
<organism>
    <name type="scientific">Pyrococcus furiosus (strain ATCC 43587 / DSM 3638 / JCM 8422 / Vc1)</name>
    <dbReference type="NCBI Taxonomy" id="186497"/>
    <lineage>
        <taxon>Archaea</taxon>
        <taxon>Methanobacteriati</taxon>
        <taxon>Methanobacteriota</taxon>
        <taxon>Thermococci</taxon>
        <taxon>Thermococcales</taxon>
        <taxon>Thermococcaceae</taxon>
        <taxon>Pyrococcus</taxon>
    </lineage>
</organism>